<organism>
    <name type="scientific">Yersinia pseudotuberculosis serotype O:3 (strain YPIII)</name>
    <dbReference type="NCBI Taxonomy" id="502800"/>
    <lineage>
        <taxon>Bacteria</taxon>
        <taxon>Pseudomonadati</taxon>
        <taxon>Pseudomonadota</taxon>
        <taxon>Gammaproteobacteria</taxon>
        <taxon>Enterobacterales</taxon>
        <taxon>Yersiniaceae</taxon>
        <taxon>Yersinia</taxon>
    </lineage>
</organism>
<evidence type="ECO:0000256" key="1">
    <source>
        <dbReference type="SAM" id="MobiDB-lite"/>
    </source>
</evidence>
<evidence type="ECO:0000269" key="2">
    <source>
    </source>
</evidence>
<evidence type="ECO:0000303" key="3">
    <source>
    </source>
</evidence>
<evidence type="ECO:0000305" key="4"/>
<evidence type="ECO:0000305" key="5">
    <source>
    </source>
</evidence>
<evidence type="ECO:0007744" key="6">
    <source>
        <dbReference type="PDB" id="4ZQU"/>
    </source>
</evidence>
<evidence type="ECO:0007829" key="7">
    <source>
        <dbReference type="PDB" id="4ZQU"/>
    </source>
</evidence>
<proteinExistence type="evidence at protein level"/>
<feature type="chain" id="PRO_0000446871" description="Deoxyribonuclease CdiA">
    <location>
        <begin position="1"/>
        <end position="1077"/>
    </location>
</feature>
<feature type="region of interest" description="FHA-2" evidence="4">
    <location>
        <begin position="67"/>
        <end position="384"/>
    </location>
</feature>
<feature type="region of interest" description="Disordered" evidence="1">
    <location>
        <begin position="531"/>
        <end position="555"/>
    </location>
</feature>
<feature type="region of interest" description="DNase activity">
    <location>
        <begin position="954"/>
        <end position="1077"/>
    </location>
</feature>
<feature type="short sequence motif" description="VENN CT cleavage motif" evidence="4">
    <location>
        <begin position="781"/>
        <end position="784"/>
    </location>
</feature>
<feature type="compositionally biased region" description="Polar residues" evidence="1">
    <location>
        <begin position="531"/>
        <end position="546"/>
    </location>
</feature>
<feature type="helix" evidence="7">
    <location>
        <begin position="956"/>
        <end position="962"/>
    </location>
</feature>
<feature type="turn" evidence="7">
    <location>
        <begin position="982"/>
        <end position="984"/>
    </location>
</feature>
<feature type="strand" evidence="7">
    <location>
        <begin position="986"/>
        <end position="992"/>
    </location>
</feature>
<feature type="helix" evidence="7">
    <location>
        <begin position="995"/>
        <end position="1000"/>
    </location>
</feature>
<feature type="helix" evidence="7">
    <location>
        <begin position="1006"/>
        <end position="1019"/>
    </location>
</feature>
<feature type="strand" evidence="7">
    <location>
        <begin position="1023"/>
        <end position="1026"/>
    </location>
</feature>
<feature type="strand" evidence="7">
    <location>
        <begin position="1029"/>
        <end position="1032"/>
    </location>
</feature>
<feature type="turn" evidence="7">
    <location>
        <begin position="1033"/>
        <end position="1035"/>
    </location>
</feature>
<feature type="strand" evidence="7">
    <location>
        <begin position="1037"/>
        <end position="1045"/>
    </location>
</feature>
<feature type="helix" evidence="7">
    <location>
        <begin position="1051"/>
        <end position="1066"/>
    </location>
</feature>
<feature type="strand" evidence="7">
    <location>
        <begin position="1070"/>
        <end position="1075"/>
    </location>
</feature>
<gene>
    <name evidence="3" type="primary">cdiA</name>
    <name type="ordered locus">YPK_0575</name>
</gene>
<sequence>MLSAGSIDVSSQNIAVAGSSVVADKDIRLRAQENLTVSTAQQSESGTQLFEQKKSGLMSTGGIGVFIGTSRQKTTDQTQTVSHIGSTVGSLTGNVRLEAGNQLTLHGSDVVAGKDLALTGADVAISAAENSRSQQYTAESKQSGLTVALSGPVGSAVNTAVTTAKAAREENTGRLAGLQGVKAALSGVQAVQAGQLVQAQGGGITEMVGVSVSLGSQKSSSQQQQEQTQVSGSALTAGNNLSIKATGGGNAANSGDILIAGSQLKAGGDTRLDAARDVQLLGAANRQKTDGSNSSRGGSIGVSVGGSGLSVFANANKGQGNERGDGTFWTETTVDSGGMFSLRSGRDTTLTGAQVSAETVKADVGRNLTLQSQQDRDNYDAKQSRASGGISVPVAGGGAAVNLSMSRDRLSSQYDSVQAQTGIFAGSGGVDIRVGEHTQLDGAVIASTAAADKNTLDTGTLGFSDIKNKAVFTVEHQGGSLSTGGPVGSDLLSNLGGMVLAGLGNGGYAEGTTQAAVSEGTITVRDTENQQQNVDDLSRDTGNANGSIGPIFDKEKEQNRLKEVQLIGEIGGQALDIASTQGKIIATHAANDKMKAVKPEDIVAAEKQWEKAHPGKAATAEDINQQIYQTAYNQAFNESGFGTGGPVQRGMQAAIAAVQGLAGGNMGAALTGASAPYLAGVIKQSTGDNPAANTMAHAVLGAVTAYASGNHALAGAAGAATAELMAPTIISALGWDKNTLTEGQKQAVSALSTLAAGLAGGLTGDSTADALAGGQAGKNAVENNYLNSTQALTFDKELSDCRKSGGNCQAVIDKWKKVSDEQSVKLDETLKNNPLEAQVWDKEVAQGGIAITERPGWLSSLGADVMSSEEAKAYVQQWNGQDLSKIDVNSPGWTKFAAFASDPENQVAVASLGMLGKDLTKAALSYMGRNTSTATVSASSVGMKWGQGNMKQGMPWEDYVGKTLPVGSRLPPNFKTYDYFDRATGAVVSAKSLDTQTMAKLSNPNQVYSSIKKNIDVTAKFEKASLSGVTVNSSMITSKEVRLAVPVNTTKAQWTEINRAIEYGKNQGVKVTVTQVK</sequence>
<comment type="function">
    <text evidence="2">Toxic component of a toxin-immunity protein module, which functions as a cellular contact-dependent growth inhibition (CDI) system. CDI modules allow bacteria to communicate with and inhibit the growth of closely related neighboring bacteria in a contact-dependent fashion. The C-terminal 123 residues (954-1077) has DNase activity in the presence of Zn(2+), converting supercoiled DNA into open-circular form. Toxic activity is neutralized by coexpression of the cognate immunity protein CdiI-YPIII, but not by non-cognate immunity proteins from other toxin-immunity modules. Expression of the DNase domain as a chimera allows bacteria to attack other non-immune bacteria which become filamentous and have lost DNA staining.</text>
</comment>
<comment type="function">
    <text evidence="4">The CdiA protein is thought to be exported from the cell through the central lumen of CdiB, the other half of its two-partner system (TPS). The TPS domain probably remains associated with CdiB while the FHA-1 domain forms an extended filament with the receptor-binding domain (RBD) at its extremity; in the secretion arrested state the C-terminus of the RBD and YP domains form a hairpin-like structure as the FHA-2, PT and CT domains are periplasmic. The YP domain is probably responsible for this arrest at the point where it re-enters the host cell periplasm. Upon binding to a target cell outer membrane receptor a signal is transmitted to activate secretion. The filament elongates slightly, the rest of CdiA is secreted and the FHA-2 domain becomes stably associated with the target cell's outer membrane where it facilitates entry of the toxic CT domain into the target cell periplasm. From there the toxic CT domain is cleaved and gains access to the target cell cytoplasm via an inner membrane protein.</text>
</comment>
<comment type="cofactor">
    <cofactor evidence="2">
        <name>Zn(2+)</name>
        <dbReference type="ChEBI" id="CHEBI:29105"/>
    </cofactor>
</comment>
<comment type="subunit">
    <text evidence="2">Interacts with cognate immunity protein CdiI-YPIII, which blocks its toxic DNase activity.</text>
</comment>
<comment type="subcellular location">
    <subcellularLocation>
        <location evidence="4">Target cell</location>
        <location evidence="4">Target cell cytoplasm</location>
    </subcellularLocation>
</comment>
<comment type="miscellaneous">
    <text evidence="5">Encoded in a defective cdi locus that has been inactivated by gene rearragements and deletions.</text>
</comment>
<reference key="1">
    <citation type="submission" date="2008-02" db="EMBL/GenBank/DDBJ databases">
        <title>Complete sequence of Yersinia pseudotuberculosis YPIII.</title>
        <authorList>
            <consortium name="US DOE Joint Genome Institute"/>
            <person name="Copeland A."/>
            <person name="Lucas S."/>
            <person name="Lapidus A."/>
            <person name="Glavina del Rio T."/>
            <person name="Dalin E."/>
            <person name="Tice H."/>
            <person name="Bruce D."/>
            <person name="Goodwin L."/>
            <person name="Pitluck S."/>
            <person name="Munk A.C."/>
            <person name="Brettin T."/>
            <person name="Detter J.C."/>
            <person name="Han C."/>
            <person name="Tapia R."/>
            <person name="Schmutz J."/>
            <person name="Larimer F."/>
            <person name="Land M."/>
            <person name="Hauser L."/>
            <person name="Challacombe J.F."/>
            <person name="Green L."/>
            <person name="Lindler L.E."/>
            <person name="Nikolich M.P."/>
            <person name="Richardson P."/>
        </authorList>
    </citation>
    <scope>NUCLEOTIDE SEQUENCE [LARGE SCALE GENOMIC DNA]</scope>
    <source>
        <strain>YPIII</strain>
    </source>
</reference>
<reference evidence="6" key="2">
    <citation type="journal article" date="2015" name="J. Mol. Biol.">
        <title>Diversification of beta-augmentation interactions between CDI toxin/immunity proteins.</title>
        <authorList>
            <person name="Morse R.P."/>
            <person name="Willett J.L."/>
            <person name="Johnson P.M."/>
            <person name="Zheng J."/>
            <person name="Credali A."/>
            <person name="Iniguez A."/>
            <person name="Nowick J.S."/>
            <person name="Hayes C.S."/>
            <person name="Goulding C.W."/>
        </authorList>
    </citation>
    <scope>X-RAY CRYSTALLOGRAPHY (2.09 ANGSTROMS) OF 954-1077 IN COMPLEX WITH CDII</scope>
    <scope>FUNCTION</scope>
    <scope>COFACTOR</scope>
    <scope>SUBUNIT</scope>
    <source>
        <strain>YPIII</strain>
    </source>
</reference>
<protein>
    <recommendedName>
        <fullName evidence="3">Deoxyribonuclease CdiA</fullName>
        <shortName>DNase CdiA</shortName>
        <ecNumber>3.1.-.-</ecNumber>
    </recommendedName>
    <alternativeName>
        <fullName evidence="3">CdiA-YPIII</fullName>
    </alternativeName>
    <alternativeName>
        <fullName>Toxin CdiA</fullName>
    </alternativeName>
</protein>
<name>CDIA_YERPY</name>
<accession>A0A0H3B0B8</accession>
<keyword id="KW-0002">3D-structure</keyword>
<keyword id="KW-0378">Hydrolase</keyword>
<keyword id="KW-0540">Nuclease</keyword>
<keyword id="KW-1266">Target cell cytoplasm</keyword>
<keyword id="KW-0800">Toxin</keyword>
<keyword id="KW-0843">Virulence</keyword>
<dbReference type="EC" id="3.1.-.-"/>
<dbReference type="EMBL" id="CP000950">
    <property type="protein sequence ID" value="ACA66878.1"/>
    <property type="molecule type" value="Genomic_DNA"/>
</dbReference>
<dbReference type="PDB" id="4ZQU">
    <property type="method" value="X-ray"/>
    <property type="resolution" value="2.09 A"/>
    <property type="chains" value="A=954-1077"/>
</dbReference>
<dbReference type="PDBsum" id="4ZQU"/>
<dbReference type="SMR" id="A0A0H3B0B8"/>
<dbReference type="KEGG" id="ypy:YPK_0575"/>
<dbReference type="EvolutionaryTrace" id="A0A0H3B0B8"/>
<dbReference type="GO" id="GO:0004530">
    <property type="term" value="F:deoxyribonuclease I activity"/>
    <property type="evidence" value="ECO:0007669"/>
    <property type="project" value="InterPro"/>
</dbReference>
<dbReference type="GO" id="GO:0090729">
    <property type="term" value="F:toxin activity"/>
    <property type="evidence" value="ECO:0007669"/>
    <property type="project" value="UniProtKB-KW"/>
</dbReference>
<dbReference type="CDD" id="cd13444">
    <property type="entry name" value="CDI_toxin_EC869_like"/>
    <property type="match status" value="1"/>
</dbReference>
<dbReference type="Gene3D" id="3.40.1350.110">
    <property type="match status" value="1"/>
</dbReference>
<dbReference type="Gene3D" id="6.10.140.1810">
    <property type="match status" value="1"/>
</dbReference>
<dbReference type="InterPro" id="IPR033799">
    <property type="entry name" value="CdiA_EC869-like"/>
</dbReference>
<dbReference type="InterPro" id="IPR048745">
    <property type="entry name" value="CdiA_helical"/>
</dbReference>
<dbReference type="InterPro" id="IPR025157">
    <property type="entry name" value="Hemagglutinin_rpt"/>
</dbReference>
<dbReference type="InterPro" id="IPR006914">
    <property type="entry name" value="VENN_dom"/>
</dbReference>
<dbReference type="Pfam" id="PF21111">
    <property type="entry name" value="CDI_toxin_EC869_like"/>
    <property type="match status" value="1"/>
</dbReference>
<dbReference type="Pfam" id="PF21483">
    <property type="entry name" value="CdiA_helical"/>
    <property type="match status" value="1"/>
</dbReference>
<dbReference type="Pfam" id="PF13332">
    <property type="entry name" value="Fil_haemagg_2"/>
    <property type="match status" value="2"/>
</dbReference>
<dbReference type="Pfam" id="PF04829">
    <property type="entry name" value="PT-VENN"/>
    <property type="match status" value="1"/>
</dbReference>